<accession>Q9IWA0</accession>
<accession>Q9QBU4</accession>
<proteinExistence type="inferred from homology"/>
<reference key="1">
    <citation type="journal article" date="2001" name="Plant Dis.">
        <title>Characterization of a virus from pigeonpea with affinities to species in the genus Aureusvirus, family Tombusviridae.</title>
        <authorList>
            <person name="Lava Kumar P."/>
            <person name="Jones A.T."/>
            <person name="Sreenivasulu P."/>
            <person name="Fenton B."/>
            <person name="Reddy D.V.R."/>
        </authorList>
        <dbReference type="AGRICOLA" id="IND23224278"/>
    </citation>
    <scope>NUCLEOTIDE SEQUENCE [GENOMIC RNA]</scope>
</reference>
<organism>
    <name type="scientific">Pothos latent virus (isolate Pigeonpea/India)</name>
    <name type="common">PoLV</name>
    <dbReference type="NCBI Taxonomy" id="652109"/>
    <lineage>
        <taxon>Viruses</taxon>
        <taxon>Riboviria</taxon>
        <taxon>Orthornavirae</taxon>
        <taxon>Kitrinoviricota</taxon>
        <taxon>Tolucaviricetes</taxon>
        <taxon>Tolivirales</taxon>
        <taxon>Tombusviridae</taxon>
        <taxon>Procedovirinae</taxon>
        <taxon>Aureusvirus</taxon>
        <taxon>Aureusvirus aurei</taxon>
    </lineage>
</organism>
<sequence>MANWCMSVLMFSFVTVYTIVTSLGQGIRRGFRAIVDEVENIYGDMCAGFKVALSKLSVSWIVVVGMIFVLNSLVVGLVPTLTMVAIIAACVGAKYGGRVPRYIRAHVDRIRKSWEKGVDDDDCCAPLPETSLERVPTKLRPRLACKIAVRAIAKVGLLKRSEANSMVYQRVCLDVMESMKMRWHDRLVILPQAVLACLERPEEVEEVMKAIEASCKGRFDVYXGCLLQHRGYNTAIISAIPDGVLLNHEGMVVRKGAPITTERKWYSFAGYASTYEYIVHNSSLVNVCRGLVERVFCVVRDGKLQRPLRPKNNVFERKLGNVGRRISSIVGYCPAMTRSEFCESYSGTRRATYERARLSLDVLPCTRKDAYLKTFVKAEKINITLKPDPAPRVIQPRDPRYNVEVGRYLKPLEPRLMKAIDKLWGEKTAIKGYTVEKVGEILHQKSLRFKNPCFVGLDASRFDQHCSRQALEWEHSVYNAIFRDPYLSELLTWQIDNVGTAYLKDGFVRYRVDGCRMSGDMNTSMGNYLIMSCLVYQFCKDIGIDASLANCGDDCVLYLEKEDLPKLKALPDWFGKMGYSMKVEKPVFTVEEIEFCQQHPVQLSRGYVMVRRPDVCLTKDLCVVRGGMTTERLQRWLYAQHDGGLALTGDCPVLGAFYRRFPSGESHGELSEYSDAHKFKAGKQYGEINSLARYSFWLAFGITPDEQLAIERDLMNWTPNVVPGSCDPRPTLLDYCSDN</sequence>
<gene>
    <name type="ORF">ORF1</name>
</gene>
<keyword id="KW-0547">Nucleotide-binding</keyword>
<keyword id="KW-0548">Nucleotidyltransferase</keyword>
<keyword id="KW-1185">Reference proteome</keyword>
<keyword id="KW-1159">RNA suppression of termination</keyword>
<keyword id="KW-0696">RNA-directed RNA polymerase</keyword>
<keyword id="KW-0808">Transferase</keyword>
<keyword id="KW-0693">Viral RNA replication</keyword>
<protein>
    <recommendedName>
        <fullName>RNA-directed RNA polymerase</fullName>
        <ecNumber>2.7.7.48</ecNumber>
    </recommendedName>
    <alternativeName>
        <fullName>Protein p84</fullName>
    </alternativeName>
    <component>
        <recommendedName>
            <fullName>Protein p25</fullName>
        </recommendedName>
    </component>
</protein>
<comment type="function">
    <text evidence="2">RNA-dependent RNA polymerase that plays an essential role in the virus replication.</text>
</comment>
<comment type="catalytic activity">
    <reaction evidence="1">
        <text>RNA(n) + a ribonucleoside 5'-triphosphate = RNA(n+1) + diphosphate</text>
        <dbReference type="Rhea" id="RHEA:21248"/>
        <dbReference type="Rhea" id="RHEA-COMP:14527"/>
        <dbReference type="Rhea" id="RHEA-COMP:17342"/>
        <dbReference type="ChEBI" id="CHEBI:33019"/>
        <dbReference type="ChEBI" id="CHEBI:61557"/>
        <dbReference type="ChEBI" id="CHEBI:140395"/>
        <dbReference type="EC" id="2.7.7.48"/>
    </reaction>
</comment>
<comment type="miscellaneous">
    <text>Readthrough of the terminator UAG occurs at position 223.</text>
</comment>
<comment type="similarity">
    <text evidence="2">Belongs to the tombusviridae RNA polymerase family.</text>
</comment>
<dbReference type="EC" id="2.7.7.48"/>
<dbReference type="EMBL" id="AJ243370">
    <property type="protein sequence ID" value="CAB59792.1"/>
    <property type="molecule type" value="Genomic_RNA"/>
</dbReference>
<dbReference type="EMBL" id="AJ243370">
    <property type="protein sequence ID" value="CAB59793.1"/>
    <property type="molecule type" value="Genomic_RNA"/>
</dbReference>
<dbReference type="Proteomes" id="UP000000572">
    <property type="component" value="Genome"/>
</dbReference>
<dbReference type="GO" id="GO:0000166">
    <property type="term" value="F:nucleotide binding"/>
    <property type="evidence" value="ECO:0007669"/>
    <property type="project" value="UniProtKB-KW"/>
</dbReference>
<dbReference type="GO" id="GO:0003723">
    <property type="term" value="F:RNA binding"/>
    <property type="evidence" value="ECO:0007669"/>
    <property type="project" value="InterPro"/>
</dbReference>
<dbReference type="GO" id="GO:0003968">
    <property type="term" value="F:RNA-directed RNA polymerase activity"/>
    <property type="evidence" value="ECO:0007669"/>
    <property type="project" value="UniProtKB-KW"/>
</dbReference>
<dbReference type="GO" id="GO:0039694">
    <property type="term" value="P:viral RNA genome replication"/>
    <property type="evidence" value="ECO:0007669"/>
    <property type="project" value="InterPro"/>
</dbReference>
<dbReference type="CDD" id="cd23243">
    <property type="entry name" value="Aureusvirus_RdRp"/>
    <property type="match status" value="1"/>
</dbReference>
<dbReference type="Gene3D" id="3.30.70.270">
    <property type="match status" value="1"/>
</dbReference>
<dbReference type="InterPro" id="IPR043502">
    <property type="entry name" value="DNA/RNA_pol_sf"/>
</dbReference>
<dbReference type="InterPro" id="IPR043128">
    <property type="entry name" value="Rev_trsase/Diguanyl_cyclase"/>
</dbReference>
<dbReference type="InterPro" id="IPR007094">
    <property type="entry name" value="RNA-dir_pol_PSvirus"/>
</dbReference>
<dbReference type="InterPro" id="IPR002166">
    <property type="entry name" value="RNA_pol_HCV"/>
</dbReference>
<dbReference type="InterPro" id="IPR013707">
    <property type="entry name" value="Tombusvirus_p33"/>
</dbReference>
<dbReference type="Pfam" id="PF00998">
    <property type="entry name" value="RdRP_3"/>
    <property type="match status" value="1"/>
</dbReference>
<dbReference type="Pfam" id="PF08500">
    <property type="entry name" value="Tombus_P33"/>
    <property type="match status" value="1"/>
</dbReference>
<dbReference type="SUPFAM" id="SSF56672">
    <property type="entry name" value="DNA/RNA polymerases"/>
    <property type="match status" value="1"/>
</dbReference>
<dbReference type="PROSITE" id="PS50507">
    <property type="entry name" value="RDRP_SSRNA_POS"/>
    <property type="match status" value="1"/>
</dbReference>
<evidence type="ECO:0000255" key="1">
    <source>
        <dbReference type="PROSITE-ProRule" id="PRU00539"/>
    </source>
</evidence>
<evidence type="ECO:0000305" key="2"/>
<name>RDRP_POLVP</name>
<organismHost>
    <name type="scientific">Cajanus cajan</name>
    <name type="common">Pigeon pea</name>
    <name type="synonym">Cajanus indicus</name>
    <dbReference type="NCBI Taxonomy" id="3821"/>
</organismHost>
<organismHost>
    <name type="scientific">Pothos</name>
    <dbReference type="NCBI Taxonomy" id="174212"/>
</organismHost>
<feature type="chain" id="PRO_0000399488" description="RNA-directed RNA polymerase">
    <location>
        <begin position="1"/>
        <end position="739"/>
    </location>
</feature>
<feature type="chain" id="PRO_0000399489" description="Protein p25">
    <location>
        <begin position="1"/>
        <end position="222"/>
    </location>
</feature>
<feature type="domain" description="RdRp catalytic" evidence="1">
    <location>
        <begin position="452"/>
        <end position="567"/>
    </location>
</feature>